<accession>O25096</accession>
<reference key="1">
    <citation type="journal article" date="1997" name="Nature">
        <title>The complete genome sequence of the gastric pathogen Helicobacter pylori.</title>
        <authorList>
            <person name="Tomb J.-F."/>
            <person name="White O."/>
            <person name="Kerlavage A.R."/>
            <person name="Clayton R.A."/>
            <person name="Sutton G.G."/>
            <person name="Fleischmann R.D."/>
            <person name="Ketchum K.A."/>
            <person name="Klenk H.-P."/>
            <person name="Gill S.R."/>
            <person name="Dougherty B.A."/>
            <person name="Nelson K.E."/>
            <person name="Quackenbush J."/>
            <person name="Zhou L."/>
            <person name="Kirkness E.F."/>
            <person name="Peterson S.N."/>
            <person name="Loftus B.J."/>
            <person name="Richardson D.L."/>
            <person name="Dodson R.J."/>
            <person name="Khalak H.G."/>
            <person name="Glodek A."/>
            <person name="McKenney K."/>
            <person name="FitzGerald L.M."/>
            <person name="Lee N."/>
            <person name="Adams M.D."/>
            <person name="Hickey E.K."/>
            <person name="Berg D.E."/>
            <person name="Gocayne J.D."/>
            <person name="Utterback T.R."/>
            <person name="Peterson J.D."/>
            <person name="Kelley J.M."/>
            <person name="Cotton M.D."/>
            <person name="Weidman J.F."/>
            <person name="Fujii C."/>
            <person name="Bowman C."/>
            <person name="Watthey L."/>
            <person name="Wallin E."/>
            <person name="Hayes W.S."/>
            <person name="Borodovsky M."/>
            <person name="Karp P.D."/>
            <person name="Smith H.O."/>
            <person name="Fraser C.M."/>
            <person name="Venter J.C."/>
        </authorList>
    </citation>
    <scope>NUCLEOTIDE SEQUENCE [LARGE SCALE GENOMIC DNA]</scope>
    <source>
        <strain>ATCC 700392 / 26695</strain>
    </source>
</reference>
<reference evidence="5 6" key="2">
    <citation type="journal article" date="2005" name="Proteins">
        <title>Crystal structure of NH3-dependent NAD+ synthetase from Helicobacter pylori.</title>
        <authorList>
            <person name="Kang G.B."/>
            <person name="Kim Y.S."/>
            <person name="Im Y.J."/>
            <person name="Rho S.H."/>
            <person name="Lee J.H."/>
            <person name="Eom S.H."/>
        </authorList>
    </citation>
    <scope>X-RAY CRYSTALLOGRAPHY (1.70 ANGSTROMS) IN COMPLEX WITH ATP</scope>
    <scope>SUBUNIT</scope>
</reference>
<proteinExistence type="evidence at protein level"/>
<keyword id="KW-0002">3D-structure</keyword>
<keyword id="KW-0067">ATP-binding</keyword>
<keyword id="KW-0436">Ligase</keyword>
<keyword id="KW-0460">Magnesium</keyword>
<keyword id="KW-0479">Metal-binding</keyword>
<keyword id="KW-0520">NAD</keyword>
<keyword id="KW-0547">Nucleotide-binding</keyword>
<keyword id="KW-1185">Reference proteome</keyword>
<gene>
    <name evidence="1" type="primary">nadE</name>
    <name type="ordered locus">HP_0329</name>
</gene>
<dbReference type="EC" id="6.3.1.5" evidence="1"/>
<dbReference type="EMBL" id="AE000511">
    <property type="protein sequence ID" value="AAD07396.1"/>
    <property type="molecule type" value="Genomic_DNA"/>
</dbReference>
<dbReference type="PIR" id="A64561">
    <property type="entry name" value="A64561"/>
</dbReference>
<dbReference type="RefSeq" id="NP_207127.1">
    <property type="nucleotide sequence ID" value="NC_000915.1"/>
</dbReference>
<dbReference type="RefSeq" id="WP_001168317.1">
    <property type="nucleotide sequence ID" value="NC_018939.1"/>
</dbReference>
<dbReference type="PDB" id="1XNG">
    <property type="method" value="X-ray"/>
    <property type="resolution" value="1.70 A"/>
    <property type="chains" value="A/B=1-260"/>
</dbReference>
<dbReference type="PDB" id="1XNH">
    <property type="method" value="X-ray"/>
    <property type="resolution" value="2.30 A"/>
    <property type="chains" value="A=1-260"/>
</dbReference>
<dbReference type="PDBsum" id="1XNG"/>
<dbReference type="PDBsum" id="1XNH"/>
<dbReference type="SMR" id="O25096"/>
<dbReference type="FunCoup" id="O25096">
    <property type="interactions" value="365"/>
</dbReference>
<dbReference type="STRING" id="85962.HP_0329"/>
<dbReference type="DrugBank" id="DB04099">
    <property type="generic name" value="Deamido-Nad"/>
</dbReference>
<dbReference type="PaxDb" id="85962-C694_01665"/>
<dbReference type="EnsemblBacteria" id="AAD07396">
    <property type="protein sequence ID" value="AAD07396"/>
    <property type="gene ID" value="HP_0329"/>
</dbReference>
<dbReference type="KEGG" id="heo:C694_01665"/>
<dbReference type="KEGG" id="hpy:HP_0329"/>
<dbReference type="PATRIC" id="fig|85962.47.peg.351"/>
<dbReference type="eggNOG" id="COG0171">
    <property type="taxonomic scope" value="Bacteria"/>
</dbReference>
<dbReference type="InParanoid" id="O25096"/>
<dbReference type="OrthoDB" id="9799210at2"/>
<dbReference type="PhylomeDB" id="O25096"/>
<dbReference type="UniPathway" id="UPA00253">
    <property type="reaction ID" value="UER00333"/>
</dbReference>
<dbReference type="EvolutionaryTrace" id="O25096"/>
<dbReference type="Proteomes" id="UP000000429">
    <property type="component" value="Chromosome"/>
</dbReference>
<dbReference type="GO" id="GO:0005737">
    <property type="term" value="C:cytoplasm"/>
    <property type="evidence" value="ECO:0007669"/>
    <property type="project" value="InterPro"/>
</dbReference>
<dbReference type="GO" id="GO:0005524">
    <property type="term" value="F:ATP binding"/>
    <property type="evidence" value="ECO:0007669"/>
    <property type="project" value="UniProtKB-UniRule"/>
</dbReference>
<dbReference type="GO" id="GO:0004359">
    <property type="term" value="F:glutaminase activity"/>
    <property type="evidence" value="ECO:0007669"/>
    <property type="project" value="InterPro"/>
</dbReference>
<dbReference type="GO" id="GO:0046872">
    <property type="term" value="F:metal ion binding"/>
    <property type="evidence" value="ECO:0007669"/>
    <property type="project" value="UniProtKB-KW"/>
</dbReference>
<dbReference type="GO" id="GO:0003952">
    <property type="term" value="F:NAD+ synthase (glutamine-hydrolyzing) activity"/>
    <property type="evidence" value="ECO:0007669"/>
    <property type="project" value="InterPro"/>
</dbReference>
<dbReference type="GO" id="GO:0008795">
    <property type="term" value="F:NAD+ synthase activity"/>
    <property type="evidence" value="ECO:0007669"/>
    <property type="project" value="UniProtKB-UniRule"/>
</dbReference>
<dbReference type="GO" id="GO:0009435">
    <property type="term" value="P:NAD biosynthetic process"/>
    <property type="evidence" value="ECO:0007669"/>
    <property type="project" value="UniProtKB-UniRule"/>
</dbReference>
<dbReference type="CDD" id="cd00553">
    <property type="entry name" value="NAD_synthase"/>
    <property type="match status" value="1"/>
</dbReference>
<dbReference type="FunFam" id="3.40.50.620:FF:000106">
    <property type="entry name" value="Glutamine-dependent NAD(+) synthetase"/>
    <property type="match status" value="1"/>
</dbReference>
<dbReference type="Gene3D" id="3.40.50.620">
    <property type="entry name" value="HUPs"/>
    <property type="match status" value="1"/>
</dbReference>
<dbReference type="HAMAP" id="MF_00193">
    <property type="entry name" value="NadE_ammonia_dep"/>
    <property type="match status" value="1"/>
</dbReference>
<dbReference type="InterPro" id="IPR022310">
    <property type="entry name" value="NAD/GMP_synthase"/>
</dbReference>
<dbReference type="InterPro" id="IPR003694">
    <property type="entry name" value="NAD_synthase"/>
</dbReference>
<dbReference type="InterPro" id="IPR022926">
    <property type="entry name" value="NH(3)-dep_NAD(+)_synth"/>
</dbReference>
<dbReference type="InterPro" id="IPR014729">
    <property type="entry name" value="Rossmann-like_a/b/a_fold"/>
</dbReference>
<dbReference type="NCBIfam" id="TIGR00552">
    <property type="entry name" value="nadE"/>
    <property type="match status" value="1"/>
</dbReference>
<dbReference type="NCBIfam" id="NF010587">
    <property type="entry name" value="PRK13980.1"/>
    <property type="match status" value="1"/>
</dbReference>
<dbReference type="PANTHER" id="PTHR23090:SF9">
    <property type="entry name" value="GLUTAMINE-DEPENDENT NAD(+) SYNTHETASE"/>
    <property type="match status" value="1"/>
</dbReference>
<dbReference type="PANTHER" id="PTHR23090">
    <property type="entry name" value="NH 3 /GLUTAMINE-DEPENDENT NAD + SYNTHETASE"/>
    <property type="match status" value="1"/>
</dbReference>
<dbReference type="Pfam" id="PF02540">
    <property type="entry name" value="NAD_synthase"/>
    <property type="match status" value="1"/>
</dbReference>
<dbReference type="SUPFAM" id="SSF52402">
    <property type="entry name" value="Adenine nucleotide alpha hydrolases-like"/>
    <property type="match status" value="1"/>
</dbReference>
<organism>
    <name type="scientific">Helicobacter pylori (strain ATCC 700392 / 26695)</name>
    <name type="common">Campylobacter pylori</name>
    <dbReference type="NCBI Taxonomy" id="85962"/>
    <lineage>
        <taxon>Bacteria</taxon>
        <taxon>Pseudomonadati</taxon>
        <taxon>Campylobacterota</taxon>
        <taxon>Epsilonproteobacteria</taxon>
        <taxon>Campylobacterales</taxon>
        <taxon>Helicobacteraceae</taxon>
        <taxon>Helicobacter</taxon>
    </lineage>
</organism>
<comment type="function">
    <text evidence="1">Catalyzes the ATP-dependent amidation of deamido-NAD to form NAD. Uses ammonia as a nitrogen source.</text>
</comment>
<comment type="catalytic activity">
    <reaction evidence="1">
        <text>deamido-NAD(+) + NH4(+) + ATP = AMP + diphosphate + NAD(+) + H(+)</text>
        <dbReference type="Rhea" id="RHEA:21188"/>
        <dbReference type="ChEBI" id="CHEBI:15378"/>
        <dbReference type="ChEBI" id="CHEBI:28938"/>
        <dbReference type="ChEBI" id="CHEBI:30616"/>
        <dbReference type="ChEBI" id="CHEBI:33019"/>
        <dbReference type="ChEBI" id="CHEBI:57540"/>
        <dbReference type="ChEBI" id="CHEBI:58437"/>
        <dbReference type="ChEBI" id="CHEBI:456215"/>
        <dbReference type="EC" id="6.3.1.5"/>
    </reaction>
</comment>
<comment type="pathway">
    <text evidence="1">Cofactor biosynthesis; NAD(+) biosynthesis; NAD(+) from deamido-NAD(+) (ammonia route): step 1/1.</text>
</comment>
<comment type="subunit">
    <text evidence="1 2">Homodimer.</text>
</comment>
<comment type="similarity">
    <text evidence="1 4">Belongs to the NAD synthetase family.</text>
</comment>
<sequence>MQKDYQKLIVYLCDFLEKEVQKRGFKKVVYGLSGGLDSAVVGVLCQKVFKENAHALLMPSSVSMPENKTDALNLCEKFSIPYTEYSIAPYDAIFSSHFKDASLTRKGNFCARLRMAFLYDYSLKSDSLVIGTSNKSERMLGYGTLFGDLACAINPIGELFKTEVYELARRLNIPKKILNKPPSADLFVGQSDEKDLGYPYSVIDPLLKDIEALFQTKPIDTETLAQLGYDEILVKNITSRIQKNAFKLELPAIAKRFNPE</sequence>
<protein>
    <recommendedName>
        <fullName evidence="1 3">NH(3)-dependent NAD(+) synthetase</fullName>
        <ecNumber evidence="1">6.3.1.5</ecNumber>
    </recommendedName>
</protein>
<evidence type="ECO:0000255" key="1">
    <source>
        <dbReference type="HAMAP-Rule" id="MF_00193"/>
    </source>
</evidence>
<evidence type="ECO:0000269" key="2">
    <source>
    </source>
</evidence>
<evidence type="ECO:0000303" key="3">
    <source>
    </source>
</evidence>
<evidence type="ECO:0000305" key="4"/>
<evidence type="ECO:0007744" key="5">
    <source>
        <dbReference type="PDB" id="1XNG"/>
    </source>
</evidence>
<evidence type="ECO:0007744" key="6">
    <source>
        <dbReference type="PDB" id="1XNH"/>
    </source>
</evidence>
<evidence type="ECO:0007829" key="7">
    <source>
        <dbReference type="PDB" id="1XNG"/>
    </source>
</evidence>
<evidence type="ECO:0007829" key="8">
    <source>
        <dbReference type="PDB" id="1XNH"/>
    </source>
</evidence>
<name>NADE_HELPY</name>
<feature type="chain" id="PRO_0000152173" description="NH(3)-dependent NAD(+) synthetase">
    <location>
        <begin position="1"/>
        <end position="260"/>
    </location>
</feature>
<feature type="binding site" evidence="1 2">
    <location>
        <begin position="31"/>
        <end position="38"/>
    </location>
    <ligand>
        <name>ATP</name>
        <dbReference type="ChEBI" id="CHEBI:30616"/>
    </ligand>
</feature>
<feature type="binding site" evidence="1">
    <location>
        <position position="37"/>
    </location>
    <ligand>
        <name>Mg(2+)</name>
        <dbReference type="ChEBI" id="CHEBI:18420"/>
    </ligand>
</feature>
<feature type="binding site" evidence="1">
    <location>
        <position position="112"/>
    </location>
    <ligand>
        <name>deamido-NAD(+)</name>
        <dbReference type="ChEBI" id="CHEBI:58437"/>
    </ligand>
</feature>
<feature type="binding site" evidence="1 2">
    <location>
        <position position="132"/>
    </location>
    <ligand>
        <name>ATP</name>
        <dbReference type="ChEBI" id="CHEBI:30616"/>
    </ligand>
</feature>
<feature type="binding site" evidence="1">
    <location>
        <position position="137"/>
    </location>
    <ligand>
        <name>Mg(2+)</name>
        <dbReference type="ChEBI" id="CHEBI:18420"/>
    </ligand>
</feature>
<feature type="binding site" evidence="1 2">
    <location>
        <position position="161"/>
    </location>
    <ligand>
        <name>ATP</name>
        <dbReference type="ChEBI" id="CHEBI:30616"/>
    </ligand>
</feature>
<feature type="binding site" evidence="1">
    <location>
        <position position="183"/>
    </location>
    <ligand>
        <name>ATP</name>
        <dbReference type="ChEBI" id="CHEBI:30616"/>
    </ligand>
</feature>
<feature type="helix" evidence="7">
    <location>
        <begin position="5"/>
        <end position="22"/>
    </location>
</feature>
<feature type="strand" evidence="7">
    <location>
        <begin position="28"/>
        <end position="31"/>
    </location>
</feature>
<feature type="helix" evidence="7">
    <location>
        <begin position="36"/>
        <end position="49"/>
    </location>
</feature>
<feature type="helix" evidence="7">
    <location>
        <begin position="50"/>
        <end position="52"/>
    </location>
</feature>
<feature type="strand" evidence="7">
    <location>
        <begin position="53"/>
        <end position="57"/>
    </location>
</feature>
<feature type="strand" evidence="7">
    <location>
        <begin position="61"/>
        <end position="63"/>
    </location>
</feature>
<feature type="helix" evidence="7">
    <location>
        <begin position="65"/>
        <end position="78"/>
    </location>
</feature>
<feature type="strand" evidence="7">
    <location>
        <begin position="82"/>
        <end position="84"/>
    </location>
</feature>
<feature type="helix" evidence="7">
    <location>
        <begin position="88"/>
        <end position="97"/>
    </location>
</feature>
<feature type="helix" evidence="7">
    <location>
        <begin position="103"/>
        <end position="125"/>
    </location>
</feature>
<feature type="strand" evidence="7">
    <location>
        <begin position="128"/>
        <end position="130"/>
    </location>
</feature>
<feature type="helix" evidence="7">
    <location>
        <begin position="135"/>
        <end position="140"/>
    </location>
</feature>
<feature type="turn" evidence="7">
    <location>
        <begin position="145"/>
        <end position="149"/>
    </location>
</feature>
<feature type="strand" evidence="7">
    <location>
        <begin position="152"/>
        <end position="154"/>
    </location>
</feature>
<feature type="turn" evidence="7">
    <location>
        <begin position="155"/>
        <end position="158"/>
    </location>
</feature>
<feature type="helix" evidence="7">
    <location>
        <begin position="161"/>
        <end position="170"/>
    </location>
</feature>
<feature type="helix" evidence="7">
    <location>
        <begin position="175"/>
        <end position="178"/>
    </location>
</feature>
<feature type="strand" evidence="8">
    <location>
        <begin position="186"/>
        <end position="189"/>
    </location>
</feature>
<feature type="helix" evidence="7">
    <location>
        <begin position="192"/>
        <end position="196"/>
    </location>
</feature>
<feature type="helix" evidence="7">
    <location>
        <begin position="200"/>
        <end position="213"/>
    </location>
</feature>
<feature type="strand" evidence="7">
    <location>
        <begin position="214"/>
        <end position="217"/>
    </location>
</feature>
<feature type="helix" evidence="7">
    <location>
        <begin position="221"/>
        <end position="226"/>
    </location>
</feature>
<feature type="helix" evidence="7">
    <location>
        <begin position="231"/>
        <end position="243"/>
    </location>
</feature>
<feature type="helix" evidence="7">
    <location>
        <begin position="245"/>
        <end position="248"/>
    </location>
</feature>